<protein>
    <recommendedName>
        <fullName>Putative esterase sll0410</fullName>
        <ecNumber>3.1.-.-</ecNumber>
    </recommendedName>
</protein>
<keyword id="KW-0378">Hydrolase</keyword>
<keyword id="KW-1185">Reference proteome</keyword>
<sequence length="166" mass="18873">MSDSPKPQLPPSPQGDHCLVHQQELEAVTEKWFEIMVRVQPHHTDYGGVVWHGTYLTWLETARVECLRSIGVDFADLVKLGCDLPVVSLALRYHRAIRLGQTAVIKVQMQEIQKVRLEWQNQIVCLETGEPCVTGKITLVAIDPAKGKIMRRLPPVVQEHLLKLRQ</sequence>
<feature type="chain" id="PRO_0000087770" description="Putative esterase sll0410">
    <location>
        <begin position="1"/>
        <end position="166"/>
    </location>
</feature>
<feature type="active site" evidence="1">
    <location>
        <position position="45"/>
    </location>
</feature>
<organism>
    <name type="scientific">Synechocystis sp. (strain ATCC 27184 / PCC 6803 / Kazusa)</name>
    <dbReference type="NCBI Taxonomy" id="1111708"/>
    <lineage>
        <taxon>Bacteria</taxon>
        <taxon>Bacillati</taxon>
        <taxon>Cyanobacteriota</taxon>
        <taxon>Cyanophyceae</taxon>
        <taxon>Synechococcales</taxon>
        <taxon>Merismopediaceae</taxon>
        <taxon>Synechocystis</taxon>
    </lineage>
</organism>
<accession>Q55116</accession>
<reference key="1">
    <citation type="journal article" date="1995" name="DNA Res.">
        <title>Sequence analysis of the genome of the unicellular cyanobacterium Synechocystis sp. strain PCC6803. I. Sequence features in the 1 Mb region from map positions 64% to 92% of the genome.</title>
        <authorList>
            <person name="Kaneko T."/>
            <person name="Tanaka A."/>
            <person name="Sato S."/>
            <person name="Kotani H."/>
            <person name="Sazuka T."/>
            <person name="Miyajima N."/>
            <person name="Sugiura M."/>
            <person name="Tabata S."/>
        </authorList>
    </citation>
    <scope>NUCLEOTIDE SEQUENCE [LARGE SCALE GENOMIC DNA]</scope>
    <source>
        <strain>ATCC 27184 / PCC 6803 / N-1</strain>
    </source>
</reference>
<reference key="2">
    <citation type="journal article" date="1996" name="DNA Res.">
        <title>Sequence analysis of the genome of the unicellular cyanobacterium Synechocystis sp. strain PCC6803. II. Sequence determination of the entire genome and assignment of potential protein-coding regions.</title>
        <authorList>
            <person name="Kaneko T."/>
            <person name="Sato S."/>
            <person name="Kotani H."/>
            <person name="Tanaka A."/>
            <person name="Asamizu E."/>
            <person name="Nakamura Y."/>
            <person name="Miyajima N."/>
            <person name="Hirosawa M."/>
            <person name="Sugiura M."/>
            <person name="Sasamoto S."/>
            <person name="Kimura T."/>
            <person name="Hosouchi T."/>
            <person name="Matsuno A."/>
            <person name="Muraki A."/>
            <person name="Nakazaki N."/>
            <person name="Naruo K."/>
            <person name="Okumura S."/>
            <person name="Shimpo S."/>
            <person name="Takeuchi C."/>
            <person name="Wada T."/>
            <person name="Watanabe A."/>
            <person name="Yamada M."/>
            <person name="Yasuda M."/>
            <person name="Tabata S."/>
        </authorList>
    </citation>
    <scope>NUCLEOTIDE SEQUENCE [LARGE SCALE GENOMIC DNA]</scope>
    <source>
        <strain>ATCC 27184 / PCC 6803 / Kazusa</strain>
    </source>
</reference>
<name>Y410_SYNY3</name>
<evidence type="ECO:0000255" key="1">
    <source>
        <dbReference type="PROSITE-ProRule" id="PRU10041"/>
    </source>
</evidence>
<evidence type="ECO:0000305" key="2"/>
<dbReference type="EC" id="3.1.-.-"/>
<dbReference type="EMBL" id="BA000022">
    <property type="protein sequence ID" value="BAA10248.1"/>
    <property type="molecule type" value="Genomic_DNA"/>
</dbReference>
<dbReference type="PIR" id="S74330">
    <property type="entry name" value="S74330"/>
</dbReference>
<dbReference type="SMR" id="Q55116"/>
<dbReference type="IntAct" id="Q55116">
    <property type="interactions" value="1"/>
</dbReference>
<dbReference type="STRING" id="1148.gene:10499747"/>
<dbReference type="PaxDb" id="1148-1001109"/>
<dbReference type="EnsemblBacteria" id="BAA10248">
    <property type="protein sequence ID" value="BAA10248"/>
    <property type="gene ID" value="BAA10248"/>
</dbReference>
<dbReference type="KEGG" id="syn:sll0410"/>
<dbReference type="eggNOG" id="COG0824">
    <property type="taxonomic scope" value="Bacteria"/>
</dbReference>
<dbReference type="InParanoid" id="Q55116"/>
<dbReference type="PhylomeDB" id="Q55116"/>
<dbReference type="Proteomes" id="UP000001425">
    <property type="component" value="Chromosome"/>
</dbReference>
<dbReference type="GO" id="GO:0047617">
    <property type="term" value="F:fatty acyl-CoA hydrolase activity"/>
    <property type="evidence" value="ECO:0000318"/>
    <property type="project" value="GO_Central"/>
</dbReference>
<dbReference type="CDD" id="cd00586">
    <property type="entry name" value="4HBT"/>
    <property type="match status" value="1"/>
</dbReference>
<dbReference type="Gene3D" id="3.10.129.10">
    <property type="entry name" value="Hotdog Thioesterase"/>
    <property type="match status" value="1"/>
</dbReference>
<dbReference type="InterPro" id="IPR050563">
    <property type="entry name" value="4-hydroxybenzoyl-CoA_TE"/>
</dbReference>
<dbReference type="InterPro" id="IPR008272">
    <property type="entry name" value="HB-CoA_thioesterase_AS"/>
</dbReference>
<dbReference type="InterPro" id="IPR029069">
    <property type="entry name" value="HotDog_dom_sf"/>
</dbReference>
<dbReference type="InterPro" id="IPR006684">
    <property type="entry name" value="YbgC/YbaW"/>
</dbReference>
<dbReference type="NCBIfam" id="TIGR00051">
    <property type="entry name" value="YbgC/FadM family acyl-CoA thioesterase"/>
    <property type="match status" value="1"/>
</dbReference>
<dbReference type="PANTHER" id="PTHR31793">
    <property type="entry name" value="4-HYDROXYBENZOYL-COA THIOESTERASE FAMILY MEMBER"/>
    <property type="match status" value="1"/>
</dbReference>
<dbReference type="PANTHER" id="PTHR31793:SF37">
    <property type="entry name" value="ACYL-COA THIOESTER HYDROLASE YBGC"/>
    <property type="match status" value="1"/>
</dbReference>
<dbReference type="Pfam" id="PF13279">
    <property type="entry name" value="4HBT_2"/>
    <property type="match status" value="1"/>
</dbReference>
<dbReference type="SUPFAM" id="SSF54637">
    <property type="entry name" value="Thioesterase/thiol ester dehydrase-isomerase"/>
    <property type="match status" value="1"/>
</dbReference>
<dbReference type="PROSITE" id="PS01328">
    <property type="entry name" value="4HBCOA_THIOESTERASE"/>
    <property type="match status" value="1"/>
</dbReference>
<comment type="similarity">
    <text evidence="2">Belongs to the 4-hydroxybenzoyl-CoA thioesterase family.</text>
</comment>
<proteinExistence type="inferred from homology"/>
<gene>
    <name type="ordered locus">sll0410</name>
</gene>